<gene>
    <name evidence="1" type="primary">fadJ</name>
    <name type="ordered locus">Spro_3378</name>
</gene>
<sequence>MHEQRAKPSAFQLTIRPDNIGVITIDVPGEKVNTLKAEFVEQVNDVLIRAQQHPALEGLVIVSGKPDSFIAGADITMIAACTTAKEAETLAKKGQSTLAQIAAFQVPVVAAIHGACLGGGLELALACHGRVCSLDDKTALGLPEVQLGLLPGSGGTQRLPRLIGASKALDMILTGKHIRARQALRLGLVDDAVPQSILLQTAIERVKQGWQSRRELPWQERLLNGPLGKSLLFSIVRKKTLAKTHGNYPAAERIIQVVRTGLDSGIASGYEAEARAFGELAMTPQSAALRSLFFASTALKKERGGNAQPHALHRIGILGGGLMGGGIACVTATRGGLPVRIKDVNETGINHALKYSWDVLSKRVRSKRMRPAERQKQMMLISGSTDYSGFDQVDVVIEAVFEDLSLKQQMVAEIEQHAAPHTIFASNTSSLPIGQIAAKAQRPEQVIGLHYFSPVDKMPLVEVIPHATTSEETIATTVALAHKQGKTAIVVADRAGFYVNRILAPYINEAARCLLEGEPIESLDKALVDFGFPVGPITLLDEVGIDVGTKISPVLVEQLGPRFAAPAAFDAVLKDGRKGRKNGRGFYLYPSEGQQRQRHKRADTSVYILLGITPKSHLQQAVIAQRCVMMMLNEAARCLDEGVIRSARDGDIGAVFGIGFPPFLGGPFRYMDQLGVEKVVKTLEYLQRQHGEYFAPCERLQRMAQQGERFYPQGS</sequence>
<protein>
    <recommendedName>
        <fullName evidence="1">Fatty acid oxidation complex subunit alpha</fullName>
    </recommendedName>
    <domain>
        <recommendedName>
            <fullName evidence="1">Enoyl-CoA hydratase/3-hydroxybutyryl-CoA epimerase</fullName>
            <ecNumber evidence="1">4.2.1.17</ecNumber>
            <ecNumber evidence="1">5.1.2.3</ecNumber>
        </recommendedName>
    </domain>
    <domain>
        <recommendedName>
            <fullName evidence="1">3-hydroxyacyl-CoA dehydrogenase</fullName>
            <ecNumber evidence="1">1.1.1.35</ecNumber>
        </recommendedName>
    </domain>
</protein>
<keyword id="KW-0963">Cytoplasm</keyword>
<keyword id="KW-0276">Fatty acid metabolism</keyword>
<keyword id="KW-0413">Isomerase</keyword>
<keyword id="KW-0442">Lipid degradation</keyword>
<keyword id="KW-0443">Lipid metabolism</keyword>
<keyword id="KW-0456">Lyase</keyword>
<keyword id="KW-0511">Multifunctional enzyme</keyword>
<keyword id="KW-0520">NAD</keyword>
<keyword id="KW-0560">Oxidoreductase</keyword>
<reference key="1">
    <citation type="submission" date="2007-09" db="EMBL/GenBank/DDBJ databases">
        <title>Complete sequence of chromosome of Serratia proteamaculans 568.</title>
        <authorList>
            <consortium name="US DOE Joint Genome Institute"/>
            <person name="Copeland A."/>
            <person name="Lucas S."/>
            <person name="Lapidus A."/>
            <person name="Barry K."/>
            <person name="Glavina del Rio T."/>
            <person name="Dalin E."/>
            <person name="Tice H."/>
            <person name="Pitluck S."/>
            <person name="Chain P."/>
            <person name="Malfatti S."/>
            <person name="Shin M."/>
            <person name="Vergez L."/>
            <person name="Schmutz J."/>
            <person name="Larimer F."/>
            <person name="Land M."/>
            <person name="Hauser L."/>
            <person name="Kyrpides N."/>
            <person name="Kim E."/>
            <person name="Taghavi S."/>
            <person name="Newman L."/>
            <person name="Vangronsveld J."/>
            <person name="van der Lelie D."/>
            <person name="Richardson P."/>
        </authorList>
    </citation>
    <scope>NUCLEOTIDE SEQUENCE [LARGE SCALE GENOMIC DNA]</scope>
    <source>
        <strain>568</strain>
    </source>
</reference>
<feature type="chain" id="PRO_0000335591" description="Fatty acid oxidation complex subunit alpha">
    <location>
        <begin position="1"/>
        <end position="715"/>
    </location>
</feature>
<feature type="region of interest" description="Enoyl-CoA hydratase" evidence="1">
    <location>
        <begin position="1"/>
        <end position="194"/>
    </location>
</feature>
<feature type="region of interest" description="3-hydroxyacyl-CoA dehydrogenase" evidence="1">
    <location>
        <begin position="310"/>
        <end position="715"/>
    </location>
</feature>
<feature type="site" description="Important for catalytic activity" evidence="1">
    <location>
        <position position="122"/>
    </location>
</feature>
<feature type="site" description="Important for catalytic activity" evidence="1">
    <location>
        <position position="144"/>
    </location>
</feature>
<organism>
    <name type="scientific">Serratia proteamaculans (strain 568)</name>
    <dbReference type="NCBI Taxonomy" id="399741"/>
    <lineage>
        <taxon>Bacteria</taxon>
        <taxon>Pseudomonadati</taxon>
        <taxon>Pseudomonadota</taxon>
        <taxon>Gammaproteobacteria</taxon>
        <taxon>Enterobacterales</taxon>
        <taxon>Yersiniaceae</taxon>
        <taxon>Serratia</taxon>
    </lineage>
</organism>
<proteinExistence type="inferred from homology"/>
<accession>A8GH86</accession>
<dbReference type="EC" id="4.2.1.17" evidence="1"/>
<dbReference type="EC" id="5.1.2.3" evidence="1"/>
<dbReference type="EC" id="1.1.1.35" evidence="1"/>
<dbReference type="EMBL" id="CP000826">
    <property type="protein sequence ID" value="ABV42476.1"/>
    <property type="status" value="ALT_INIT"/>
    <property type="molecule type" value="Genomic_DNA"/>
</dbReference>
<dbReference type="SMR" id="A8GH86"/>
<dbReference type="STRING" id="399741.Spro_3378"/>
<dbReference type="KEGG" id="spe:Spro_3378"/>
<dbReference type="eggNOG" id="COG1024">
    <property type="taxonomic scope" value="Bacteria"/>
</dbReference>
<dbReference type="eggNOG" id="COG1250">
    <property type="taxonomic scope" value="Bacteria"/>
</dbReference>
<dbReference type="HOGENOM" id="CLU_009834_16_1_6"/>
<dbReference type="UniPathway" id="UPA00659"/>
<dbReference type="GO" id="GO:0005737">
    <property type="term" value="C:cytoplasm"/>
    <property type="evidence" value="ECO:0007669"/>
    <property type="project" value="UniProtKB-SubCell"/>
</dbReference>
<dbReference type="GO" id="GO:0008692">
    <property type="term" value="F:3-hydroxybutyryl-CoA epimerase activity"/>
    <property type="evidence" value="ECO:0007669"/>
    <property type="project" value="UniProtKB-UniRule"/>
</dbReference>
<dbReference type="GO" id="GO:0004300">
    <property type="term" value="F:enoyl-CoA hydratase activity"/>
    <property type="evidence" value="ECO:0007669"/>
    <property type="project" value="UniProtKB-UniRule"/>
</dbReference>
<dbReference type="GO" id="GO:0016509">
    <property type="term" value="F:long-chain-3-hydroxyacyl-CoA dehydrogenase activity"/>
    <property type="evidence" value="ECO:0007669"/>
    <property type="project" value="TreeGrafter"/>
</dbReference>
<dbReference type="GO" id="GO:0070403">
    <property type="term" value="F:NAD+ binding"/>
    <property type="evidence" value="ECO:0007669"/>
    <property type="project" value="InterPro"/>
</dbReference>
<dbReference type="GO" id="GO:0006635">
    <property type="term" value="P:fatty acid beta-oxidation"/>
    <property type="evidence" value="ECO:0007669"/>
    <property type="project" value="UniProtKB-UniRule"/>
</dbReference>
<dbReference type="CDD" id="cd06558">
    <property type="entry name" value="crotonase-like"/>
    <property type="match status" value="1"/>
</dbReference>
<dbReference type="FunFam" id="1.10.1040.50:FF:000003">
    <property type="entry name" value="Fatty acid oxidation complex subunit alpha"/>
    <property type="match status" value="1"/>
</dbReference>
<dbReference type="FunFam" id="3.90.226.10:FF:000011">
    <property type="entry name" value="Fatty acid oxidation complex subunit alpha"/>
    <property type="match status" value="1"/>
</dbReference>
<dbReference type="FunFam" id="3.40.50.720:FF:000009">
    <property type="entry name" value="Fatty oxidation complex, alpha subunit"/>
    <property type="match status" value="1"/>
</dbReference>
<dbReference type="Gene3D" id="1.10.1040.50">
    <property type="match status" value="1"/>
</dbReference>
<dbReference type="Gene3D" id="3.90.226.10">
    <property type="entry name" value="2-enoyl-CoA Hydratase, Chain A, domain 1"/>
    <property type="match status" value="1"/>
</dbReference>
<dbReference type="Gene3D" id="3.40.50.720">
    <property type="entry name" value="NAD(P)-binding Rossmann-like Domain"/>
    <property type="match status" value="1"/>
</dbReference>
<dbReference type="HAMAP" id="MF_01617">
    <property type="entry name" value="FadJ"/>
    <property type="match status" value="1"/>
</dbReference>
<dbReference type="InterPro" id="IPR006180">
    <property type="entry name" value="3-OHacyl-CoA_DH_CS"/>
</dbReference>
<dbReference type="InterPro" id="IPR006176">
    <property type="entry name" value="3-OHacyl-CoA_DH_NAD-bd"/>
</dbReference>
<dbReference type="InterPro" id="IPR006108">
    <property type="entry name" value="3HC_DH_C"/>
</dbReference>
<dbReference type="InterPro" id="IPR008927">
    <property type="entry name" value="6-PGluconate_DH-like_C_sf"/>
</dbReference>
<dbReference type="InterPro" id="IPR029045">
    <property type="entry name" value="ClpP/crotonase-like_dom_sf"/>
</dbReference>
<dbReference type="InterPro" id="IPR001753">
    <property type="entry name" value="Enoyl-CoA_hydra/iso"/>
</dbReference>
<dbReference type="InterPro" id="IPR050136">
    <property type="entry name" value="FA_oxidation_alpha_subunit"/>
</dbReference>
<dbReference type="InterPro" id="IPR012802">
    <property type="entry name" value="FadJ"/>
</dbReference>
<dbReference type="InterPro" id="IPR036291">
    <property type="entry name" value="NAD(P)-bd_dom_sf"/>
</dbReference>
<dbReference type="NCBIfam" id="TIGR02440">
    <property type="entry name" value="FadJ"/>
    <property type="match status" value="1"/>
</dbReference>
<dbReference type="NCBIfam" id="NF008363">
    <property type="entry name" value="PRK11154.1"/>
    <property type="match status" value="1"/>
</dbReference>
<dbReference type="PANTHER" id="PTHR43612">
    <property type="entry name" value="TRIFUNCTIONAL ENZYME SUBUNIT ALPHA"/>
    <property type="match status" value="1"/>
</dbReference>
<dbReference type="PANTHER" id="PTHR43612:SF3">
    <property type="entry name" value="TRIFUNCTIONAL ENZYME SUBUNIT ALPHA, MITOCHONDRIAL"/>
    <property type="match status" value="1"/>
</dbReference>
<dbReference type="Pfam" id="PF00725">
    <property type="entry name" value="3HCDH"/>
    <property type="match status" value="2"/>
</dbReference>
<dbReference type="Pfam" id="PF02737">
    <property type="entry name" value="3HCDH_N"/>
    <property type="match status" value="1"/>
</dbReference>
<dbReference type="Pfam" id="PF00378">
    <property type="entry name" value="ECH_1"/>
    <property type="match status" value="1"/>
</dbReference>
<dbReference type="SUPFAM" id="SSF48179">
    <property type="entry name" value="6-phosphogluconate dehydrogenase C-terminal domain-like"/>
    <property type="match status" value="2"/>
</dbReference>
<dbReference type="SUPFAM" id="SSF52096">
    <property type="entry name" value="ClpP/crotonase"/>
    <property type="match status" value="1"/>
</dbReference>
<dbReference type="SUPFAM" id="SSF51735">
    <property type="entry name" value="NAD(P)-binding Rossmann-fold domains"/>
    <property type="match status" value="1"/>
</dbReference>
<dbReference type="PROSITE" id="PS00067">
    <property type="entry name" value="3HCDH"/>
    <property type="match status" value="1"/>
</dbReference>
<comment type="function">
    <text evidence="1">Catalyzes the formation of a hydroxyacyl-CoA by addition of water on enoyl-CoA. Also exhibits 3-hydroxyacyl-CoA epimerase and 3-hydroxyacyl-CoA dehydrogenase activities.</text>
</comment>
<comment type="catalytic activity">
    <reaction evidence="1">
        <text>a (3S)-3-hydroxyacyl-CoA = a (2E)-enoyl-CoA + H2O</text>
        <dbReference type="Rhea" id="RHEA:16105"/>
        <dbReference type="ChEBI" id="CHEBI:15377"/>
        <dbReference type="ChEBI" id="CHEBI:57318"/>
        <dbReference type="ChEBI" id="CHEBI:58856"/>
        <dbReference type="EC" id="4.2.1.17"/>
    </reaction>
</comment>
<comment type="catalytic activity">
    <reaction evidence="1">
        <text>a 4-saturated-(3S)-3-hydroxyacyl-CoA = a (3E)-enoyl-CoA + H2O</text>
        <dbReference type="Rhea" id="RHEA:20724"/>
        <dbReference type="ChEBI" id="CHEBI:15377"/>
        <dbReference type="ChEBI" id="CHEBI:58521"/>
        <dbReference type="ChEBI" id="CHEBI:137480"/>
        <dbReference type="EC" id="4.2.1.17"/>
    </reaction>
</comment>
<comment type="catalytic activity">
    <reaction evidence="1">
        <text>a (3S)-3-hydroxyacyl-CoA + NAD(+) = a 3-oxoacyl-CoA + NADH + H(+)</text>
        <dbReference type="Rhea" id="RHEA:22432"/>
        <dbReference type="ChEBI" id="CHEBI:15378"/>
        <dbReference type="ChEBI" id="CHEBI:57318"/>
        <dbReference type="ChEBI" id="CHEBI:57540"/>
        <dbReference type="ChEBI" id="CHEBI:57945"/>
        <dbReference type="ChEBI" id="CHEBI:90726"/>
        <dbReference type="EC" id="1.1.1.35"/>
    </reaction>
</comment>
<comment type="catalytic activity">
    <reaction evidence="1">
        <text>(3S)-3-hydroxybutanoyl-CoA = (3R)-3-hydroxybutanoyl-CoA</text>
        <dbReference type="Rhea" id="RHEA:21760"/>
        <dbReference type="ChEBI" id="CHEBI:57315"/>
        <dbReference type="ChEBI" id="CHEBI:57316"/>
        <dbReference type="EC" id="5.1.2.3"/>
    </reaction>
</comment>
<comment type="pathway">
    <text evidence="1">Lipid metabolism; fatty acid beta-oxidation.</text>
</comment>
<comment type="subunit">
    <text evidence="1">Heterotetramer of two alpha chains (FadJ) and two beta chains (FadI).</text>
</comment>
<comment type="subcellular location">
    <subcellularLocation>
        <location evidence="1">Cytoplasm</location>
    </subcellularLocation>
</comment>
<comment type="similarity">
    <text evidence="1">In the N-terminal section; belongs to the enoyl-CoA hydratase/isomerase family.</text>
</comment>
<comment type="similarity">
    <text evidence="1">In the central section; belongs to the 3-hydroxyacyl-CoA dehydrogenase family.</text>
</comment>
<comment type="sequence caution" evidence="2">
    <conflict type="erroneous initiation">
        <sequence resource="EMBL-CDS" id="ABV42476"/>
    </conflict>
</comment>
<evidence type="ECO:0000255" key="1">
    <source>
        <dbReference type="HAMAP-Rule" id="MF_01617"/>
    </source>
</evidence>
<evidence type="ECO:0000305" key="2"/>
<name>FADJ_SERP5</name>